<organism>
    <name type="scientific">Mycobacterium avium (strain 104)</name>
    <dbReference type="NCBI Taxonomy" id="243243"/>
    <lineage>
        <taxon>Bacteria</taxon>
        <taxon>Bacillati</taxon>
        <taxon>Actinomycetota</taxon>
        <taxon>Actinomycetes</taxon>
        <taxon>Mycobacteriales</taxon>
        <taxon>Mycobacteriaceae</taxon>
        <taxon>Mycobacterium</taxon>
        <taxon>Mycobacterium avium complex (MAC)</taxon>
    </lineage>
</organism>
<protein>
    <recommendedName>
        <fullName evidence="1">Small ribosomal subunit protein uS7</fullName>
    </recommendedName>
    <alternativeName>
        <fullName evidence="2">30S ribosomal protein S7</fullName>
    </alternativeName>
</protein>
<accession>A0QL37</accession>
<gene>
    <name evidence="1" type="primary">rpsG</name>
    <name type="ordered locus">MAV_4491</name>
</gene>
<name>RS7_MYCA1</name>
<dbReference type="EMBL" id="CP000479">
    <property type="protein sequence ID" value="ABK69473.1"/>
    <property type="molecule type" value="Genomic_DNA"/>
</dbReference>
<dbReference type="RefSeq" id="WP_003873540.1">
    <property type="nucleotide sequence ID" value="NC_008595.1"/>
</dbReference>
<dbReference type="SMR" id="A0QL37"/>
<dbReference type="GeneID" id="75272005"/>
<dbReference type="KEGG" id="mav:MAV_4491"/>
<dbReference type="HOGENOM" id="CLU_072226_1_1_11"/>
<dbReference type="Proteomes" id="UP000001574">
    <property type="component" value="Chromosome"/>
</dbReference>
<dbReference type="GO" id="GO:0015935">
    <property type="term" value="C:small ribosomal subunit"/>
    <property type="evidence" value="ECO:0007669"/>
    <property type="project" value="InterPro"/>
</dbReference>
<dbReference type="GO" id="GO:0019843">
    <property type="term" value="F:rRNA binding"/>
    <property type="evidence" value="ECO:0007669"/>
    <property type="project" value="UniProtKB-UniRule"/>
</dbReference>
<dbReference type="GO" id="GO:0003735">
    <property type="term" value="F:structural constituent of ribosome"/>
    <property type="evidence" value="ECO:0007669"/>
    <property type="project" value="InterPro"/>
</dbReference>
<dbReference type="GO" id="GO:0000049">
    <property type="term" value="F:tRNA binding"/>
    <property type="evidence" value="ECO:0007669"/>
    <property type="project" value="UniProtKB-UniRule"/>
</dbReference>
<dbReference type="GO" id="GO:0006412">
    <property type="term" value="P:translation"/>
    <property type="evidence" value="ECO:0007669"/>
    <property type="project" value="UniProtKB-UniRule"/>
</dbReference>
<dbReference type="CDD" id="cd14869">
    <property type="entry name" value="uS7_Bacteria"/>
    <property type="match status" value="1"/>
</dbReference>
<dbReference type="FunFam" id="1.10.455.10:FF:000001">
    <property type="entry name" value="30S ribosomal protein S7"/>
    <property type="match status" value="1"/>
</dbReference>
<dbReference type="Gene3D" id="1.10.455.10">
    <property type="entry name" value="Ribosomal protein S7 domain"/>
    <property type="match status" value="1"/>
</dbReference>
<dbReference type="HAMAP" id="MF_00480_B">
    <property type="entry name" value="Ribosomal_uS7_B"/>
    <property type="match status" value="1"/>
</dbReference>
<dbReference type="InterPro" id="IPR000235">
    <property type="entry name" value="Ribosomal_uS7"/>
</dbReference>
<dbReference type="InterPro" id="IPR005717">
    <property type="entry name" value="Ribosomal_uS7_bac/org-type"/>
</dbReference>
<dbReference type="InterPro" id="IPR020606">
    <property type="entry name" value="Ribosomal_uS7_CS"/>
</dbReference>
<dbReference type="InterPro" id="IPR023798">
    <property type="entry name" value="Ribosomal_uS7_dom"/>
</dbReference>
<dbReference type="InterPro" id="IPR036823">
    <property type="entry name" value="Ribosomal_uS7_dom_sf"/>
</dbReference>
<dbReference type="NCBIfam" id="TIGR01029">
    <property type="entry name" value="rpsG_bact"/>
    <property type="match status" value="1"/>
</dbReference>
<dbReference type="PANTHER" id="PTHR11205">
    <property type="entry name" value="RIBOSOMAL PROTEIN S7"/>
    <property type="match status" value="1"/>
</dbReference>
<dbReference type="Pfam" id="PF00177">
    <property type="entry name" value="Ribosomal_S7"/>
    <property type="match status" value="1"/>
</dbReference>
<dbReference type="PIRSF" id="PIRSF002122">
    <property type="entry name" value="RPS7p_RPS7a_RPS5e_RPS7o"/>
    <property type="match status" value="1"/>
</dbReference>
<dbReference type="SUPFAM" id="SSF47973">
    <property type="entry name" value="Ribosomal protein S7"/>
    <property type="match status" value="1"/>
</dbReference>
<dbReference type="PROSITE" id="PS00052">
    <property type="entry name" value="RIBOSOMAL_S7"/>
    <property type="match status" value="1"/>
</dbReference>
<proteinExistence type="inferred from homology"/>
<feature type="chain" id="PRO_1000014232" description="Small ribosomal subunit protein uS7">
    <location>
        <begin position="1"/>
        <end position="156"/>
    </location>
</feature>
<evidence type="ECO:0000255" key="1">
    <source>
        <dbReference type="HAMAP-Rule" id="MF_00480"/>
    </source>
</evidence>
<evidence type="ECO:0000305" key="2"/>
<comment type="function">
    <text evidence="1">One of the primary rRNA binding proteins, it binds directly to 16S rRNA where it nucleates assembly of the head domain of the 30S subunit. Is located at the subunit interface close to the decoding center, probably blocks exit of the E-site tRNA.</text>
</comment>
<comment type="subunit">
    <text evidence="1">Part of the 30S ribosomal subunit. Contacts proteins S9 and S11.</text>
</comment>
<comment type="similarity">
    <text evidence="1">Belongs to the universal ribosomal protein uS7 family.</text>
</comment>
<reference key="1">
    <citation type="submission" date="2006-10" db="EMBL/GenBank/DDBJ databases">
        <authorList>
            <person name="Fleischmann R.D."/>
            <person name="Dodson R.J."/>
            <person name="Haft D.H."/>
            <person name="Merkel J.S."/>
            <person name="Nelson W.C."/>
            <person name="Fraser C.M."/>
        </authorList>
    </citation>
    <scope>NUCLEOTIDE SEQUENCE [LARGE SCALE GENOMIC DNA]</scope>
    <source>
        <strain>104</strain>
    </source>
</reference>
<keyword id="KW-0687">Ribonucleoprotein</keyword>
<keyword id="KW-0689">Ribosomal protein</keyword>
<keyword id="KW-0694">RNA-binding</keyword>
<keyword id="KW-0699">rRNA-binding</keyword>
<keyword id="KW-0820">tRNA-binding</keyword>
<sequence>MPRKGPAPKRPLVNDPVYGSQLVTQLVNKVLLKGKKSLAERIVYGALENAREKTGTDPVITLKRALDNVKPALEVRSRRVGGATYQVPVEVRPDRSTTLALRWLVSFSRQRREKTMVERLANEILDASNGLGASVKRREDTHKMAEANRAFAHYRW</sequence>